<accession>A9MIH3</accession>
<proteinExistence type="inferred from homology"/>
<keyword id="KW-0067">ATP-binding</keyword>
<keyword id="KW-0963">Cytoplasm</keyword>
<keyword id="KW-0324">Glycolysis</keyword>
<keyword id="KW-0418">Kinase</keyword>
<keyword id="KW-0547">Nucleotide-binding</keyword>
<keyword id="KW-1185">Reference proteome</keyword>
<keyword id="KW-0808">Transferase</keyword>
<sequence length="321" mass="34549">MTKYALVGDVGGTNARLALCDIASGEISQAKTYSGLDYPSLEAVVRVYLDEHSVSVEDGCIAIACPITGDWVAMTNHTWAFSIAEMKKNLGFSHLEIINDFTAVSMAIPMLKKEHLIQFGGGEPVDGKPIAVYGAGTGLGVAHLVHVDKRWISLPGEGGHVDFAPNSEEEAMILEILRAEIGHVSAERVLSGPGLVNLYRAIVKSDNRLPENLRPKDITARALADSCIDCRRALSLFCVIMGRFGGDLALTLGTFGGVYIAGGIVPRFLEFFKASGFRGGFEDKGRFKDYVHSIPVYLIVHDNPGLLGSGAHLRQTLGHIL</sequence>
<dbReference type="EC" id="2.7.1.2" evidence="1"/>
<dbReference type="EMBL" id="CP000880">
    <property type="protein sequence ID" value="ABX20410.1"/>
    <property type="molecule type" value="Genomic_DNA"/>
</dbReference>
<dbReference type="SMR" id="A9MIH3"/>
<dbReference type="STRING" id="41514.SARI_00481"/>
<dbReference type="KEGG" id="ses:SARI_00481"/>
<dbReference type="HOGENOM" id="CLU_042582_1_0_6"/>
<dbReference type="Proteomes" id="UP000002084">
    <property type="component" value="Chromosome"/>
</dbReference>
<dbReference type="GO" id="GO:0005829">
    <property type="term" value="C:cytosol"/>
    <property type="evidence" value="ECO:0007669"/>
    <property type="project" value="TreeGrafter"/>
</dbReference>
<dbReference type="GO" id="GO:0005524">
    <property type="term" value="F:ATP binding"/>
    <property type="evidence" value="ECO:0007669"/>
    <property type="project" value="UniProtKB-UniRule"/>
</dbReference>
<dbReference type="GO" id="GO:0005536">
    <property type="term" value="F:D-glucose binding"/>
    <property type="evidence" value="ECO:0007669"/>
    <property type="project" value="InterPro"/>
</dbReference>
<dbReference type="GO" id="GO:0004340">
    <property type="term" value="F:glucokinase activity"/>
    <property type="evidence" value="ECO:0007669"/>
    <property type="project" value="UniProtKB-UniRule"/>
</dbReference>
<dbReference type="GO" id="GO:0006096">
    <property type="term" value="P:glycolytic process"/>
    <property type="evidence" value="ECO:0007669"/>
    <property type="project" value="UniProtKB-UniRule"/>
</dbReference>
<dbReference type="CDD" id="cd24008">
    <property type="entry name" value="ASKHA_NBD_GLK"/>
    <property type="match status" value="1"/>
</dbReference>
<dbReference type="FunFam" id="3.30.420.40:FF:000045">
    <property type="entry name" value="Glucokinase"/>
    <property type="match status" value="1"/>
</dbReference>
<dbReference type="FunFam" id="3.40.367.20:FF:000002">
    <property type="entry name" value="Glucokinase"/>
    <property type="match status" value="1"/>
</dbReference>
<dbReference type="Gene3D" id="3.30.420.40">
    <property type="match status" value="1"/>
</dbReference>
<dbReference type="Gene3D" id="3.40.367.20">
    <property type="match status" value="1"/>
</dbReference>
<dbReference type="HAMAP" id="MF_00524">
    <property type="entry name" value="Glucokinase"/>
    <property type="match status" value="1"/>
</dbReference>
<dbReference type="InterPro" id="IPR043129">
    <property type="entry name" value="ATPase_NBD"/>
</dbReference>
<dbReference type="InterPro" id="IPR050201">
    <property type="entry name" value="Bacterial_glucokinase"/>
</dbReference>
<dbReference type="InterPro" id="IPR003836">
    <property type="entry name" value="Glucokinase"/>
</dbReference>
<dbReference type="NCBIfam" id="TIGR00749">
    <property type="entry name" value="glk"/>
    <property type="match status" value="1"/>
</dbReference>
<dbReference type="NCBIfam" id="NF001414">
    <property type="entry name" value="PRK00292.1-1"/>
    <property type="match status" value="1"/>
</dbReference>
<dbReference type="NCBIfam" id="NF001416">
    <property type="entry name" value="PRK00292.1-3"/>
    <property type="match status" value="1"/>
</dbReference>
<dbReference type="NCBIfam" id="NF009073">
    <property type="entry name" value="PRK12408.1"/>
    <property type="match status" value="1"/>
</dbReference>
<dbReference type="PANTHER" id="PTHR47690">
    <property type="entry name" value="GLUCOKINASE"/>
    <property type="match status" value="1"/>
</dbReference>
<dbReference type="PANTHER" id="PTHR47690:SF1">
    <property type="entry name" value="GLUCOKINASE"/>
    <property type="match status" value="1"/>
</dbReference>
<dbReference type="Pfam" id="PF02685">
    <property type="entry name" value="Glucokinase"/>
    <property type="match status" value="1"/>
</dbReference>
<dbReference type="SUPFAM" id="SSF53067">
    <property type="entry name" value="Actin-like ATPase domain"/>
    <property type="match status" value="1"/>
</dbReference>
<feature type="chain" id="PRO_1000081697" description="Glucokinase">
    <location>
        <begin position="1"/>
        <end position="321"/>
    </location>
</feature>
<feature type="binding site" evidence="1">
    <location>
        <begin position="8"/>
        <end position="13"/>
    </location>
    <ligand>
        <name>ATP</name>
        <dbReference type="ChEBI" id="CHEBI:30616"/>
    </ligand>
</feature>
<name>GLK_SALAR</name>
<organism>
    <name type="scientific">Salmonella arizonae (strain ATCC BAA-731 / CDC346-86 / RSK2980)</name>
    <dbReference type="NCBI Taxonomy" id="41514"/>
    <lineage>
        <taxon>Bacteria</taxon>
        <taxon>Pseudomonadati</taxon>
        <taxon>Pseudomonadota</taxon>
        <taxon>Gammaproteobacteria</taxon>
        <taxon>Enterobacterales</taxon>
        <taxon>Enterobacteriaceae</taxon>
        <taxon>Salmonella</taxon>
    </lineage>
</organism>
<gene>
    <name evidence="1" type="primary">glk</name>
    <name type="ordered locus">SARI_00481</name>
</gene>
<protein>
    <recommendedName>
        <fullName evidence="1">Glucokinase</fullName>
        <ecNumber evidence="1">2.7.1.2</ecNumber>
    </recommendedName>
    <alternativeName>
        <fullName evidence="1">Glucose kinase</fullName>
    </alternativeName>
</protein>
<evidence type="ECO:0000255" key="1">
    <source>
        <dbReference type="HAMAP-Rule" id="MF_00524"/>
    </source>
</evidence>
<comment type="catalytic activity">
    <reaction evidence="1">
        <text>D-glucose + ATP = D-glucose 6-phosphate + ADP + H(+)</text>
        <dbReference type="Rhea" id="RHEA:17825"/>
        <dbReference type="ChEBI" id="CHEBI:4167"/>
        <dbReference type="ChEBI" id="CHEBI:15378"/>
        <dbReference type="ChEBI" id="CHEBI:30616"/>
        <dbReference type="ChEBI" id="CHEBI:61548"/>
        <dbReference type="ChEBI" id="CHEBI:456216"/>
        <dbReference type="EC" id="2.7.1.2"/>
    </reaction>
</comment>
<comment type="subcellular location">
    <subcellularLocation>
        <location evidence="1">Cytoplasm</location>
    </subcellularLocation>
</comment>
<comment type="similarity">
    <text evidence="1">Belongs to the bacterial glucokinase family.</text>
</comment>
<reference key="1">
    <citation type="submission" date="2007-11" db="EMBL/GenBank/DDBJ databases">
        <authorList>
            <consortium name="The Salmonella enterica serovar Arizonae Genome Sequencing Project"/>
            <person name="McClelland M."/>
            <person name="Sanderson E.K."/>
            <person name="Porwollik S."/>
            <person name="Spieth J."/>
            <person name="Clifton W.S."/>
            <person name="Fulton R."/>
            <person name="Chunyan W."/>
            <person name="Wollam A."/>
            <person name="Shah N."/>
            <person name="Pepin K."/>
            <person name="Bhonagiri V."/>
            <person name="Nash W."/>
            <person name="Johnson M."/>
            <person name="Thiruvilangam P."/>
            <person name="Wilson R."/>
        </authorList>
    </citation>
    <scope>NUCLEOTIDE SEQUENCE [LARGE SCALE GENOMIC DNA]</scope>
    <source>
        <strain>ATCC BAA-731 / CDC346-86 / RSK2980</strain>
    </source>
</reference>